<keyword id="KW-0968">Cytoplasmic vesicle</keyword>
<keyword id="KW-0472">Membrane</keyword>
<keyword id="KW-0653">Protein transport</keyword>
<keyword id="KW-1185">Reference proteome</keyword>
<keyword id="KW-0677">Repeat</keyword>
<keyword id="KW-0813">Transport</keyword>
<keyword id="KW-0926">Vacuole</keyword>
<keyword id="KW-0853">WD repeat</keyword>
<feature type="chain" id="PRO_0000051027" description="SVP1-like protein 2">
    <location>
        <begin position="1"/>
        <end position="432"/>
    </location>
</feature>
<feature type="repeat" description="WD 1">
    <location>
        <begin position="223"/>
        <end position="263"/>
    </location>
</feature>
<feature type="repeat" description="WD 2">
    <location>
        <begin position="268"/>
        <end position="307"/>
    </location>
</feature>
<reference key="1">
    <citation type="journal article" date="2004" name="Nature">
        <title>Genome evolution in yeasts.</title>
        <authorList>
            <person name="Dujon B."/>
            <person name="Sherman D."/>
            <person name="Fischer G."/>
            <person name="Durrens P."/>
            <person name="Casaregola S."/>
            <person name="Lafontaine I."/>
            <person name="de Montigny J."/>
            <person name="Marck C."/>
            <person name="Neuveglise C."/>
            <person name="Talla E."/>
            <person name="Goffard N."/>
            <person name="Frangeul L."/>
            <person name="Aigle M."/>
            <person name="Anthouard V."/>
            <person name="Babour A."/>
            <person name="Barbe V."/>
            <person name="Barnay S."/>
            <person name="Blanchin S."/>
            <person name="Beckerich J.-M."/>
            <person name="Beyne E."/>
            <person name="Bleykasten C."/>
            <person name="Boisrame A."/>
            <person name="Boyer J."/>
            <person name="Cattolico L."/>
            <person name="Confanioleri F."/>
            <person name="de Daruvar A."/>
            <person name="Despons L."/>
            <person name="Fabre E."/>
            <person name="Fairhead C."/>
            <person name="Ferry-Dumazet H."/>
            <person name="Groppi A."/>
            <person name="Hantraye F."/>
            <person name="Hennequin C."/>
            <person name="Jauniaux N."/>
            <person name="Joyet P."/>
            <person name="Kachouri R."/>
            <person name="Kerrest A."/>
            <person name="Koszul R."/>
            <person name="Lemaire M."/>
            <person name="Lesur I."/>
            <person name="Ma L."/>
            <person name="Muller H."/>
            <person name="Nicaud J.-M."/>
            <person name="Nikolski M."/>
            <person name="Oztas S."/>
            <person name="Ozier-Kalogeropoulos O."/>
            <person name="Pellenz S."/>
            <person name="Potier S."/>
            <person name="Richard G.-F."/>
            <person name="Straub M.-L."/>
            <person name="Suleau A."/>
            <person name="Swennen D."/>
            <person name="Tekaia F."/>
            <person name="Wesolowski-Louvel M."/>
            <person name="Westhof E."/>
            <person name="Wirth B."/>
            <person name="Zeniou-Meyer M."/>
            <person name="Zivanovic Y."/>
            <person name="Bolotin-Fukuhara M."/>
            <person name="Thierry A."/>
            <person name="Bouchier C."/>
            <person name="Caudron B."/>
            <person name="Scarpelli C."/>
            <person name="Gaillardin C."/>
            <person name="Weissenbach J."/>
            <person name="Wincker P."/>
            <person name="Souciet J.-L."/>
        </authorList>
    </citation>
    <scope>NUCLEOTIDE SEQUENCE [LARGE SCALE GENOMIC DNA]</scope>
    <source>
        <strain>ATCC 36239 / CBS 767 / BCRC 21394 / JCM 1990 / NBRC 0083 / IGC 2968</strain>
    </source>
</reference>
<organism>
    <name type="scientific">Debaryomyces hansenii (strain ATCC 36239 / CBS 767 / BCRC 21394 / JCM 1990 / NBRC 0083 / IGC 2968)</name>
    <name type="common">Yeast</name>
    <name type="synonym">Torulaspora hansenii</name>
    <dbReference type="NCBI Taxonomy" id="284592"/>
    <lineage>
        <taxon>Eukaryota</taxon>
        <taxon>Fungi</taxon>
        <taxon>Dikarya</taxon>
        <taxon>Ascomycota</taxon>
        <taxon>Saccharomycotina</taxon>
        <taxon>Pichiomycetes</taxon>
        <taxon>Debaryomycetaceae</taxon>
        <taxon>Debaryomyces</taxon>
    </lineage>
</organism>
<proteinExistence type="inferred from homology"/>
<dbReference type="EMBL" id="CR382135">
    <property type="protein sequence ID" value="CAG86048.2"/>
    <property type="molecule type" value="Genomic_DNA"/>
</dbReference>
<dbReference type="RefSeq" id="XP_457990.2">
    <property type="nucleotide sequence ID" value="XM_457990.1"/>
</dbReference>
<dbReference type="SMR" id="Q6BUX9"/>
<dbReference type="FunCoup" id="Q6BUX9">
    <property type="interactions" value="405"/>
</dbReference>
<dbReference type="STRING" id="284592.Q6BUX9"/>
<dbReference type="GeneID" id="2900227"/>
<dbReference type="KEGG" id="dha:DEHA2C07084g"/>
<dbReference type="VEuPathDB" id="FungiDB:DEHA2C07084g"/>
<dbReference type="eggNOG" id="KOG2111">
    <property type="taxonomic scope" value="Eukaryota"/>
</dbReference>
<dbReference type="HOGENOM" id="CLU_025895_0_1_1"/>
<dbReference type="InParanoid" id="Q6BUX9"/>
<dbReference type="OMA" id="GGPQCMC"/>
<dbReference type="OrthoDB" id="1667587at2759"/>
<dbReference type="Proteomes" id="UP000000599">
    <property type="component" value="Chromosome C"/>
</dbReference>
<dbReference type="GO" id="GO:0030659">
    <property type="term" value="C:cytoplasmic vesicle membrane"/>
    <property type="evidence" value="ECO:0007669"/>
    <property type="project" value="UniProtKB-SubCell"/>
</dbReference>
<dbReference type="GO" id="GO:0005768">
    <property type="term" value="C:endosome"/>
    <property type="evidence" value="ECO:0007669"/>
    <property type="project" value="EnsemblFungi"/>
</dbReference>
<dbReference type="GO" id="GO:0000324">
    <property type="term" value="C:fungal-type vacuole"/>
    <property type="evidence" value="ECO:0007669"/>
    <property type="project" value="EnsemblFungi"/>
</dbReference>
<dbReference type="GO" id="GO:0005774">
    <property type="term" value="C:vacuolar membrane"/>
    <property type="evidence" value="ECO:0007669"/>
    <property type="project" value="UniProtKB-SubCell"/>
</dbReference>
<dbReference type="GO" id="GO:0080025">
    <property type="term" value="F:phosphatidylinositol-3,5-bisphosphate binding"/>
    <property type="evidence" value="ECO:0007669"/>
    <property type="project" value="EnsemblFungi"/>
</dbReference>
<dbReference type="GO" id="GO:0032266">
    <property type="term" value="F:phosphatidylinositol-3-phosphate binding"/>
    <property type="evidence" value="ECO:0007669"/>
    <property type="project" value="EnsemblFungi"/>
</dbReference>
<dbReference type="GO" id="GO:0070273">
    <property type="term" value="F:phosphatidylinositol-4-phosphate binding"/>
    <property type="evidence" value="ECO:0007669"/>
    <property type="project" value="EnsemblFungi"/>
</dbReference>
<dbReference type="GO" id="GO:0010314">
    <property type="term" value="F:phosphatidylinositol-5-phosphate binding"/>
    <property type="evidence" value="ECO:0007669"/>
    <property type="project" value="EnsemblFungi"/>
</dbReference>
<dbReference type="GO" id="GO:0034727">
    <property type="term" value="P:piecemeal microautophagy of the nucleus"/>
    <property type="evidence" value="ECO:0007669"/>
    <property type="project" value="EnsemblFungi"/>
</dbReference>
<dbReference type="GO" id="GO:0015031">
    <property type="term" value="P:protein transport"/>
    <property type="evidence" value="ECO:0007669"/>
    <property type="project" value="UniProtKB-KW"/>
</dbReference>
<dbReference type="Gene3D" id="2.130.10.10">
    <property type="entry name" value="YVTN repeat-like/Quinoprotein amine dehydrogenase"/>
    <property type="match status" value="1"/>
</dbReference>
<dbReference type="InterPro" id="IPR048720">
    <property type="entry name" value="PROPPIN"/>
</dbReference>
<dbReference type="InterPro" id="IPR015943">
    <property type="entry name" value="WD40/YVTN_repeat-like_dom_sf"/>
</dbReference>
<dbReference type="InterPro" id="IPR036322">
    <property type="entry name" value="WD40_repeat_dom_sf"/>
</dbReference>
<dbReference type="InterPro" id="IPR001680">
    <property type="entry name" value="WD40_rpt"/>
</dbReference>
<dbReference type="PANTHER" id="PTHR11227">
    <property type="entry name" value="WD-REPEAT PROTEIN INTERACTING WITH PHOSPHOINOSIDES WIPI -RELATED"/>
    <property type="match status" value="1"/>
</dbReference>
<dbReference type="Pfam" id="PF21032">
    <property type="entry name" value="PROPPIN"/>
    <property type="match status" value="1"/>
</dbReference>
<dbReference type="SMART" id="SM00320">
    <property type="entry name" value="WD40"/>
    <property type="match status" value="3"/>
</dbReference>
<dbReference type="SUPFAM" id="SSF50978">
    <property type="entry name" value="WD40 repeat-like"/>
    <property type="match status" value="1"/>
</dbReference>
<accession>Q6BUX9</accession>
<gene>
    <name type="primary">HSV2</name>
    <name type="ordered locus">DEHA2C07084g</name>
</gene>
<name>HSV2_DEBHA</name>
<protein>
    <recommendedName>
        <fullName>SVP1-like protein 2</fullName>
    </recommendedName>
</protein>
<comment type="function">
    <text evidence="1">Involved in mitochondrial or peroxisomal functions and amino acid signaling pathways.</text>
</comment>
<comment type="subcellular location">
    <subcellularLocation>
        <location evidence="1">Vacuole membrane</location>
        <topology evidence="1">Peripheral membrane protein</topology>
    </subcellularLocation>
    <subcellularLocation>
        <location evidence="1">Cytoplasmic vesicle membrane</location>
        <topology evidence="1">Peripheral membrane protein</topology>
    </subcellularLocation>
    <text evidence="1">Vesicular and vacuolar.</text>
</comment>
<comment type="domain">
    <text evidence="1">May contain a beta-propeller domain involved in specific binding to phosphatidylinositol 3,5-bisphosphate (PIP2), leading to the association of the protein to the membrane.</text>
</comment>
<comment type="similarity">
    <text evidence="2">Belongs to the WD repeat PROPPIN family.</text>
</comment>
<sequence>MNTLSAISNNKQSKELQILNINFNQDQGCFAVGHEYGFLVYNTNPIDIRVKRNFNINGHGSGIAHITMLHRTNYLALVGGGKNPKFANNKLVIWDDLKRKNSLNLEFMSPVLNVLLSRIRIIVVLKNQVLVYGFSSPPKKFATYETIENEFGLADLSVNFTNSIGNNLSTSNSSISSLVSNQVSYDSNKYQTLAFPGRSIGQIQIVDVSPSGQEKNLVSIIKAHKSKIRCLALNRSGTLVASASETGTIIRVHSTHNTALLYEFRRGLDRAIVTSMKFSHDDSKLAVLSDKNTLHVYNVSPLNTSSGATSDLVTHNETYPVNRSHLLGSIAFPIPIPKYFKSTWSFCSVNTNKYHPSGSDNDTINDVGIIGWSGNDSIIIIWQNKKIWEKYVIVEKRNKYLGDINDGLNTSHQGSSNWELVRFNWKNLDNLD</sequence>
<evidence type="ECO:0000250" key="1"/>
<evidence type="ECO:0000305" key="2"/>